<reference key="1">
    <citation type="journal article" date="2005" name="Nature">
        <title>Initial sequence of the chimpanzee genome and comparison with the human genome.</title>
        <authorList>
            <consortium name="Chimpanzee sequencing and analysis consortium"/>
        </authorList>
    </citation>
    <scope>NUCLEOTIDE SEQUENCE [LARGE SCALE GENOMIC DNA]</scope>
</reference>
<reference key="2">
    <citation type="journal article" date="2005" name="Genetics">
        <title>Comparative genomics and diversifying selection of the clustered vertebrate protocadherin genes.</title>
        <authorList>
            <person name="Wu Q."/>
        </authorList>
    </citation>
    <scope>IDENTIFICATION</scope>
</reference>
<proteinExistence type="inferred from homology"/>
<accession>Q5DRE2</accession>
<evidence type="ECO:0000250" key="1"/>
<evidence type="ECO:0000255" key="2"/>
<evidence type="ECO:0000255" key="3">
    <source>
        <dbReference type="PROSITE-ProRule" id="PRU00043"/>
    </source>
</evidence>
<evidence type="ECO:0000256" key="4">
    <source>
        <dbReference type="SAM" id="MobiDB-lite"/>
    </source>
</evidence>
<organism>
    <name type="scientific">Pan troglodytes</name>
    <name type="common">Chimpanzee</name>
    <dbReference type="NCBI Taxonomy" id="9598"/>
    <lineage>
        <taxon>Eukaryota</taxon>
        <taxon>Metazoa</taxon>
        <taxon>Chordata</taxon>
        <taxon>Craniata</taxon>
        <taxon>Vertebrata</taxon>
        <taxon>Euteleostomi</taxon>
        <taxon>Mammalia</taxon>
        <taxon>Eutheria</taxon>
        <taxon>Euarchontoglires</taxon>
        <taxon>Primates</taxon>
        <taxon>Haplorrhini</taxon>
        <taxon>Catarrhini</taxon>
        <taxon>Hominidae</taxon>
        <taxon>Pan</taxon>
    </lineage>
</organism>
<sequence>MVGWGVAVLCLWVSCGAAAGQLEYSVPEETERGVAVGNLSADLRLPAAAMSSRNFRFLSSHRELYFGVDLPSGNLVVREPADREQLCRAKAACVLTYDLVLEDPLELHKIRIHVLDTNDNSPLFPAGDVQLHIPEFLTPGARFALPNAQDDDEGSNGILSYSLSPSQHFRLDMGSRVDGSEYPELVLEKALDREQRATHLLVLTARDGGLPARSGDAQVTIIVVDTNDNAPVFERSVYRTKVPETAPNGTVLFRVQALDPDEGSNGEVQYSLSNSTQAELRHRFHVHPKSGEVQVAASLGPPETLLEAYIEARDEGVFGLASTAKLLVEVTDVNDHAPELDFLTLSNPVPEDAAPGTVIALFSVKDEDLDSNGRVICGMSSAGPFQLTASFDNYYSLLIDGPLDREQISEYQVLITASDSGSPPLSTRRTITVSVADVNDNTPSFPQPQQELFIAENNGPGASLGRVFAQDPDLGKNGLVSYELLDVISEGPSASSLVAVESSSGAITAKTSFDFEQLRGFHFQVEGRDGGIPPRSATVTINLFVVDRNDNYPVILFPLPRNCSVPVEIVPRSARTGHLVTKVVAEDADSGSNAWLSYHISRASDSSLFRISANIGELRTARLVLPTDAVKQRVVVVVRDHGDPPLSSSVTLGVLLSNSVPQLLPDFEDVWEPGGQLSAQNLYLVIALACISFLFLGCLLFFVCTKLHQSPGCCAQSCCRSTEDLRYGRKMVSNPCMTSATIDVTTVERLSQTYLYRASLGLGSDNNSLLLRGEYNAADLRNLATGVGLNLPISCIQIRNRKGDHANVNAMPRQPNPDWRYSASLRAGMHSSVHLEEAGILRAGPGGPDQQWPTVSSATPEPEAGEVSPPVGAGVNSNSWTFKYGPGNPKQSGPGELPDKFIIPGSPAIISIRQEPANSQIDKSDFITFGKKEETKKKKKKKKGNKTQEKKEKGNSTTDNSDQ</sequence>
<name>PCDC1_PANTR</name>
<comment type="function">
    <text>Potential calcium-dependent cell-adhesion protein. May be involved in the establishment and maintenance of specific neuronal connections in the brain.</text>
</comment>
<comment type="subcellular location">
    <subcellularLocation>
        <location evidence="1">Cell membrane</location>
        <topology evidence="1">Single-pass type I membrane protein</topology>
    </subcellularLocation>
</comment>
<gene>
    <name type="primary">PCDHAC1</name>
</gene>
<dbReference type="RefSeq" id="NP_001076051.1">
    <property type="nucleotide sequence ID" value="NM_001082582.1"/>
</dbReference>
<dbReference type="SMR" id="Q5DRE2"/>
<dbReference type="FunCoup" id="Q5DRE2">
    <property type="interactions" value="32"/>
</dbReference>
<dbReference type="GlyCosmos" id="Q5DRE2">
    <property type="glycosylation" value="4 sites, No reported glycans"/>
</dbReference>
<dbReference type="GeneID" id="100034721"/>
<dbReference type="KEGG" id="ptr:100034721"/>
<dbReference type="CTD" id="56135"/>
<dbReference type="InParanoid" id="Q5DRE2"/>
<dbReference type="Proteomes" id="UP000002277">
    <property type="component" value="Unplaced"/>
</dbReference>
<dbReference type="GO" id="GO:0005886">
    <property type="term" value="C:plasma membrane"/>
    <property type="evidence" value="ECO:0000318"/>
    <property type="project" value="GO_Central"/>
</dbReference>
<dbReference type="GO" id="GO:0005509">
    <property type="term" value="F:calcium ion binding"/>
    <property type="evidence" value="ECO:0007669"/>
    <property type="project" value="InterPro"/>
</dbReference>
<dbReference type="GO" id="GO:0007155">
    <property type="term" value="P:cell adhesion"/>
    <property type="evidence" value="ECO:0000318"/>
    <property type="project" value="GO_Central"/>
</dbReference>
<dbReference type="GO" id="GO:0007156">
    <property type="term" value="P:homophilic cell adhesion via plasma membrane adhesion molecules"/>
    <property type="evidence" value="ECO:0007669"/>
    <property type="project" value="InterPro"/>
</dbReference>
<dbReference type="GO" id="GO:0007399">
    <property type="term" value="P:nervous system development"/>
    <property type="evidence" value="ECO:0007669"/>
    <property type="project" value="UniProtKB-ARBA"/>
</dbReference>
<dbReference type="CDD" id="cd11304">
    <property type="entry name" value="Cadherin_repeat"/>
    <property type="match status" value="6"/>
</dbReference>
<dbReference type="FunFam" id="2.60.40.60:FF:000004">
    <property type="entry name" value="Protocadherin 1 gamma 2"/>
    <property type="match status" value="1"/>
</dbReference>
<dbReference type="FunFam" id="2.60.40.60:FF:000002">
    <property type="entry name" value="Protocadherin alpha 2"/>
    <property type="match status" value="1"/>
</dbReference>
<dbReference type="FunFam" id="2.60.40.60:FF:000006">
    <property type="entry name" value="Protocadherin alpha 2"/>
    <property type="match status" value="1"/>
</dbReference>
<dbReference type="FunFam" id="2.60.40.60:FF:000007">
    <property type="entry name" value="Protocadherin alpha 2"/>
    <property type="match status" value="1"/>
</dbReference>
<dbReference type="FunFam" id="2.60.40.60:FF:000294">
    <property type="entry name" value="Protocadherin alpha subfamily C, 2"/>
    <property type="match status" value="1"/>
</dbReference>
<dbReference type="FunFam" id="2.60.40.60:FF:000129">
    <property type="entry name" value="protocadherin alpha-C2 isoform X1"/>
    <property type="match status" value="1"/>
</dbReference>
<dbReference type="Gene3D" id="2.60.40.60">
    <property type="entry name" value="Cadherins"/>
    <property type="match status" value="6"/>
</dbReference>
<dbReference type="InterPro" id="IPR002126">
    <property type="entry name" value="Cadherin-like_dom"/>
</dbReference>
<dbReference type="InterPro" id="IPR015919">
    <property type="entry name" value="Cadherin-like_sf"/>
</dbReference>
<dbReference type="InterPro" id="IPR032455">
    <property type="entry name" value="Cadherin_C"/>
</dbReference>
<dbReference type="InterPro" id="IPR031904">
    <property type="entry name" value="Cadherin_CBD"/>
</dbReference>
<dbReference type="InterPro" id="IPR020894">
    <property type="entry name" value="Cadherin_CS"/>
</dbReference>
<dbReference type="InterPro" id="IPR013164">
    <property type="entry name" value="Cadherin_N"/>
</dbReference>
<dbReference type="InterPro" id="IPR050174">
    <property type="entry name" value="Protocadherin/Cadherin-CA"/>
</dbReference>
<dbReference type="PANTHER" id="PTHR24028">
    <property type="entry name" value="CADHERIN-87A"/>
    <property type="match status" value="1"/>
</dbReference>
<dbReference type="PANTHER" id="PTHR24028:SF153">
    <property type="entry name" value="PROTOCADHERIN ALPHA-C1"/>
    <property type="match status" value="1"/>
</dbReference>
<dbReference type="Pfam" id="PF00028">
    <property type="entry name" value="Cadherin"/>
    <property type="match status" value="5"/>
</dbReference>
<dbReference type="Pfam" id="PF08266">
    <property type="entry name" value="Cadherin_2"/>
    <property type="match status" value="1"/>
</dbReference>
<dbReference type="Pfam" id="PF16492">
    <property type="entry name" value="Cadherin_C_2"/>
    <property type="match status" value="1"/>
</dbReference>
<dbReference type="Pfam" id="PF15974">
    <property type="entry name" value="Cadherin_tail"/>
    <property type="match status" value="1"/>
</dbReference>
<dbReference type="PRINTS" id="PR00205">
    <property type="entry name" value="CADHERIN"/>
</dbReference>
<dbReference type="SMART" id="SM00112">
    <property type="entry name" value="CA"/>
    <property type="match status" value="6"/>
</dbReference>
<dbReference type="SUPFAM" id="SSF49313">
    <property type="entry name" value="Cadherin-like"/>
    <property type="match status" value="5"/>
</dbReference>
<dbReference type="PROSITE" id="PS00232">
    <property type="entry name" value="CADHERIN_1"/>
    <property type="match status" value="5"/>
</dbReference>
<dbReference type="PROSITE" id="PS50268">
    <property type="entry name" value="CADHERIN_2"/>
    <property type="match status" value="6"/>
</dbReference>
<keyword id="KW-0106">Calcium</keyword>
<keyword id="KW-0130">Cell adhesion</keyword>
<keyword id="KW-1003">Cell membrane</keyword>
<keyword id="KW-0325">Glycoprotein</keyword>
<keyword id="KW-0472">Membrane</keyword>
<keyword id="KW-1185">Reference proteome</keyword>
<keyword id="KW-0677">Repeat</keyword>
<keyword id="KW-0732">Signal</keyword>
<keyword id="KW-0812">Transmembrane</keyword>
<keyword id="KW-1133">Transmembrane helix</keyword>
<protein>
    <recommendedName>
        <fullName>Protocadherin alpha-C1</fullName>
        <shortName>PCDH-alpha-C1</shortName>
    </recommendedName>
</protein>
<feature type="signal peptide" evidence="2">
    <location>
        <begin position="1"/>
        <end position="18"/>
    </location>
</feature>
<feature type="chain" id="PRO_0000003911" description="Protocadherin alpha-C1">
    <location>
        <begin position="19"/>
        <end position="963"/>
    </location>
</feature>
<feature type="topological domain" description="Extracellular" evidence="2">
    <location>
        <begin position="19"/>
        <end position="683"/>
    </location>
</feature>
<feature type="transmembrane region" description="Helical" evidence="2">
    <location>
        <begin position="684"/>
        <end position="704"/>
    </location>
</feature>
<feature type="topological domain" description="Cytoplasmic" evidence="2">
    <location>
        <begin position="705"/>
        <end position="963"/>
    </location>
</feature>
<feature type="domain" description="Cadherin 1" evidence="3">
    <location>
        <begin position="19"/>
        <end position="124"/>
    </location>
</feature>
<feature type="domain" description="Cadherin 2" evidence="3">
    <location>
        <begin position="125"/>
        <end position="233"/>
    </location>
</feature>
<feature type="domain" description="Cadherin 3" evidence="3">
    <location>
        <begin position="234"/>
        <end position="340"/>
    </location>
</feature>
<feature type="domain" description="Cadherin 4" evidence="3">
    <location>
        <begin position="349"/>
        <end position="445"/>
    </location>
</feature>
<feature type="domain" description="Cadherin 5" evidence="3">
    <location>
        <begin position="446"/>
        <end position="555"/>
    </location>
</feature>
<feature type="domain" description="Cadherin 6" evidence="3">
    <location>
        <begin position="570"/>
        <end position="667"/>
    </location>
</feature>
<feature type="repeat" description="PXXP 1">
    <location>
        <begin position="812"/>
        <end position="815"/>
    </location>
</feature>
<feature type="repeat" description="PXXP 2">
    <location>
        <begin position="845"/>
        <end position="848"/>
    </location>
</feature>
<feature type="repeat" description="PXXP 3">
    <location>
        <begin position="886"/>
        <end position="889"/>
    </location>
</feature>
<feature type="repeat" description="PXXP 4">
    <location>
        <begin position="904"/>
        <end position="907"/>
    </location>
</feature>
<feature type="region of interest" description="4 X 4 AA repeats of P-X-X-P">
    <location>
        <begin position="812"/>
        <end position="907"/>
    </location>
</feature>
<feature type="region of interest" description="Disordered" evidence="4">
    <location>
        <begin position="844"/>
        <end position="902"/>
    </location>
</feature>
<feature type="region of interest" description="Disordered" evidence="4">
    <location>
        <begin position="914"/>
        <end position="963"/>
    </location>
</feature>
<feature type="compositionally biased region" description="Basic and acidic residues" evidence="4">
    <location>
        <begin position="922"/>
        <end position="936"/>
    </location>
</feature>
<feature type="glycosylation site" description="N-linked (GlcNAc...) asparagine" evidence="2">
    <location>
        <position position="38"/>
    </location>
</feature>
<feature type="glycosylation site" description="N-linked (GlcNAc...) asparagine" evidence="2">
    <location>
        <position position="248"/>
    </location>
</feature>
<feature type="glycosylation site" description="N-linked (GlcNAc...) asparagine" evidence="2">
    <location>
        <position position="274"/>
    </location>
</feature>
<feature type="glycosylation site" description="N-linked (GlcNAc...) asparagine" evidence="2">
    <location>
        <position position="562"/>
    </location>
</feature>